<evidence type="ECO:0000255" key="1">
    <source>
        <dbReference type="HAMAP-Rule" id="MF_01535"/>
    </source>
</evidence>
<protein>
    <recommendedName>
        <fullName evidence="1">Rhamnulokinase</fullName>
        <shortName evidence="1">RhaB</shortName>
        <ecNumber evidence="1">2.7.1.5</ecNumber>
    </recommendedName>
    <alternativeName>
        <fullName evidence="1">ATP:L-rhamnulose phosphotransferase</fullName>
    </alternativeName>
    <alternativeName>
        <fullName evidence="1">L-rhamnulose 1-kinase</fullName>
    </alternativeName>
    <alternativeName>
        <fullName evidence="1">Rhamnulose kinase</fullName>
    </alternativeName>
</protein>
<sequence>MTFRNCVAVDLGASSGRVMLARYERECRSLTLREIHRFNNGLHSQNGYVTWDVDSLESAIRLGLNKVCEEGIRIDSIGIDTWGVDFVLLDQQGQRVGLPVAYRDSRTNGLMAQAQQQLGKRDIYQRSGIQFLPFNTLYQLRALTEQQPELIPHIAHALLMPDYFSYRLTGKMNWEYTNATTTQLVNINSDDWDESLLAWSGANKAWFGRPTHPGNVIGHWICPQGNEIPVVAVASHDTASAVIASPLNGSRAAYLSSGTWSLMGFESQTPFTNDTALAANITNEGGAEGRYRVLKNIMGLWLLQRVLQEQQINDLPALISATQALPACRFIINPNDDRFINPETMCSEIQAACRETAQPIPESDAELARCIFDSLALLYADVLHELAQLRGEDFSQLHIVGGGCQNTLLNQLCADACGIRVIAGPVEASTLGNIGIQLMTLDELNNVDDFRQVVSTTANLTTFTPNPDSEIAHYVAQIHSTRQTKELCA</sequence>
<gene>
    <name evidence="1" type="primary">rhaB</name>
    <name type="ordered locus">ECDH10B_4094</name>
</gene>
<proteinExistence type="inferred from homology"/>
<accession>B1XB71</accession>
<keyword id="KW-0067">ATP-binding</keyword>
<keyword id="KW-1015">Disulfide bond</keyword>
<keyword id="KW-0418">Kinase</keyword>
<keyword id="KW-0460">Magnesium</keyword>
<keyword id="KW-0547">Nucleotide-binding</keyword>
<keyword id="KW-0684">Rhamnose metabolism</keyword>
<keyword id="KW-0808">Transferase</keyword>
<name>RHAB_ECODH</name>
<reference key="1">
    <citation type="journal article" date="2008" name="J. Bacteriol.">
        <title>The complete genome sequence of Escherichia coli DH10B: insights into the biology of a laboratory workhorse.</title>
        <authorList>
            <person name="Durfee T."/>
            <person name="Nelson R."/>
            <person name="Baldwin S."/>
            <person name="Plunkett G. III"/>
            <person name="Burland V."/>
            <person name="Mau B."/>
            <person name="Petrosino J.F."/>
            <person name="Qin X."/>
            <person name="Muzny D.M."/>
            <person name="Ayele M."/>
            <person name="Gibbs R.A."/>
            <person name="Csorgo B."/>
            <person name="Posfai G."/>
            <person name="Weinstock G.M."/>
            <person name="Blattner F.R."/>
        </authorList>
    </citation>
    <scope>NUCLEOTIDE SEQUENCE [LARGE SCALE GENOMIC DNA]</scope>
    <source>
        <strain>K12 / DH10B</strain>
    </source>
</reference>
<dbReference type="EC" id="2.7.1.5" evidence="1"/>
<dbReference type="EMBL" id="CP000948">
    <property type="protein sequence ID" value="ACB04917.1"/>
    <property type="molecule type" value="Genomic_DNA"/>
</dbReference>
<dbReference type="RefSeq" id="WP_000144073.1">
    <property type="nucleotide sequence ID" value="NC_010473.1"/>
</dbReference>
<dbReference type="SMR" id="B1XB71"/>
<dbReference type="KEGG" id="ecd:ECDH10B_4094"/>
<dbReference type="HOGENOM" id="CLU_039395_0_0_6"/>
<dbReference type="UniPathway" id="UPA00541">
    <property type="reaction ID" value="UER00602"/>
</dbReference>
<dbReference type="GO" id="GO:0005829">
    <property type="term" value="C:cytosol"/>
    <property type="evidence" value="ECO:0007669"/>
    <property type="project" value="TreeGrafter"/>
</dbReference>
<dbReference type="GO" id="GO:0005524">
    <property type="term" value="F:ATP binding"/>
    <property type="evidence" value="ECO:0007669"/>
    <property type="project" value="UniProtKB-KW"/>
</dbReference>
<dbReference type="GO" id="GO:0004370">
    <property type="term" value="F:glycerol kinase activity"/>
    <property type="evidence" value="ECO:0007669"/>
    <property type="project" value="TreeGrafter"/>
</dbReference>
<dbReference type="GO" id="GO:0008993">
    <property type="term" value="F:rhamnulokinase activity"/>
    <property type="evidence" value="ECO:0007669"/>
    <property type="project" value="UniProtKB-UniRule"/>
</dbReference>
<dbReference type="GO" id="GO:0006071">
    <property type="term" value="P:glycerol metabolic process"/>
    <property type="evidence" value="ECO:0007669"/>
    <property type="project" value="TreeGrafter"/>
</dbReference>
<dbReference type="GO" id="GO:0019301">
    <property type="term" value="P:rhamnose catabolic process"/>
    <property type="evidence" value="ECO:0007669"/>
    <property type="project" value="UniProtKB-UniRule"/>
</dbReference>
<dbReference type="CDD" id="cd07771">
    <property type="entry name" value="ASKHA_NBD_FGGY_RhaB-like"/>
    <property type="match status" value="1"/>
</dbReference>
<dbReference type="FunFam" id="3.30.420.40:FF:000064">
    <property type="entry name" value="Rhamnulokinase"/>
    <property type="match status" value="1"/>
</dbReference>
<dbReference type="FunFam" id="3.30.420.40:FF:000073">
    <property type="entry name" value="Rhamnulokinase"/>
    <property type="match status" value="1"/>
</dbReference>
<dbReference type="Gene3D" id="3.30.420.40">
    <property type="match status" value="2"/>
</dbReference>
<dbReference type="HAMAP" id="MF_01535">
    <property type="entry name" value="Rhamnulokinase"/>
    <property type="match status" value="1"/>
</dbReference>
<dbReference type="InterPro" id="IPR043129">
    <property type="entry name" value="ATPase_NBD"/>
</dbReference>
<dbReference type="InterPro" id="IPR018485">
    <property type="entry name" value="FGGY_C"/>
</dbReference>
<dbReference type="InterPro" id="IPR018484">
    <property type="entry name" value="FGGY_N"/>
</dbReference>
<dbReference type="InterPro" id="IPR013449">
    <property type="entry name" value="Rhamnulokinase"/>
</dbReference>
<dbReference type="NCBIfam" id="NF007925">
    <property type="entry name" value="PRK10640.1"/>
    <property type="match status" value="1"/>
</dbReference>
<dbReference type="NCBIfam" id="TIGR02627">
    <property type="entry name" value="rhamnulo_kin"/>
    <property type="match status" value="1"/>
</dbReference>
<dbReference type="PANTHER" id="PTHR10196:SF93">
    <property type="entry name" value="L-RHAMNULOKINASE"/>
    <property type="match status" value="1"/>
</dbReference>
<dbReference type="PANTHER" id="PTHR10196">
    <property type="entry name" value="SUGAR KINASE"/>
    <property type="match status" value="1"/>
</dbReference>
<dbReference type="Pfam" id="PF02782">
    <property type="entry name" value="FGGY_C"/>
    <property type="match status" value="1"/>
</dbReference>
<dbReference type="Pfam" id="PF00370">
    <property type="entry name" value="FGGY_N"/>
    <property type="match status" value="1"/>
</dbReference>
<dbReference type="SUPFAM" id="SSF53067">
    <property type="entry name" value="Actin-like ATPase domain"/>
    <property type="match status" value="2"/>
</dbReference>
<organism>
    <name type="scientific">Escherichia coli (strain K12 / DH10B)</name>
    <dbReference type="NCBI Taxonomy" id="316385"/>
    <lineage>
        <taxon>Bacteria</taxon>
        <taxon>Pseudomonadati</taxon>
        <taxon>Pseudomonadota</taxon>
        <taxon>Gammaproteobacteria</taxon>
        <taxon>Enterobacterales</taxon>
        <taxon>Enterobacteriaceae</taxon>
        <taxon>Escherichia</taxon>
    </lineage>
</organism>
<comment type="function">
    <text evidence="1">Involved in the catabolism of L-rhamnose (6-deoxy-L-mannose). Catalyzes the transfer of the gamma-phosphate group from ATP to the 1-hydroxyl group of L-rhamnulose to yield L-rhamnulose 1-phosphate.</text>
</comment>
<comment type="catalytic activity">
    <reaction evidence="1">
        <text>L-rhamnulose + ATP = L-rhamnulose 1-phosphate + ADP + H(+)</text>
        <dbReference type="Rhea" id="RHEA:20117"/>
        <dbReference type="ChEBI" id="CHEBI:15378"/>
        <dbReference type="ChEBI" id="CHEBI:17897"/>
        <dbReference type="ChEBI" id="CHEBI:30616"/>
        <dbReference type="ChEBI" id="CHEBI:58313"/>
        <dbReference type="ChEBI" id="CHEBI:456216"/>
        <dbReference type="EC" id="2.7.1.5"/>
    </reaction>
</comment>
<comment type="cofactor">
    <cofactor evidence="1">
        <name>Mg(2+)</name>
        <dbReference type="ChEBI" id="CHEBI:18420"/>
    </cofactor>
</comment>
<comment type="pathway">
    <text evidence="1">Carbohydrate degradation; L-rhamnose degradation; glycerone phosphate from L-rhamnose: step 2/3.</text>
</comment>
<comment type="subunit">
    <text evidence="1">Monomer.</text>
</comment>
<comment type="similarity">
    <text evidence="1">Belongs to the rhamnulokinase family.</text>
</comment>
<feature type="chain" id="PRO_1000146542" description="Rhamnulokinase">
    <location>
        <begin position="1"/>
        <end position="489"/>
    </location>
</feature>
<feature type="active site" description="Proton acceptor" evidence="1">
    <location>
        <position position="237"/>
    </location>
</feature>
<feature type="binding site" evidence="1">
    <location>
        <begin position="13"/>
        <end position="17"/>
    </location>
    <ligand>
        <name>ATP</name>
        <dbReference type="ChEBI" id="CHEBI:30616"/>
    </ligand>
</feature>
<feature type="binding site" evidence="1">
    <location>
        <position position="83"/>
    </location>
    <ligand>
        <name>substrate</name>
    </ligand>
</feature>
<feature type="binding site" evidence="1">
    <location>
        <begin position="236"/>
        <end position="238"/>
    </location>
    <ligand>
        <name>substrate</name>
    </ligand>
</feature>
<feature type="binding site" evidence="1">
    <location>
        <position position="259"/>
    </location>
    <ligand>
        <name>ATP</name>
        <dbReference type="ChEBI" id="CHEBI:30616"/>
    </ligand>
</feature>
<feature type="binding site" evidence="1">
    <location>
        <position position="296"/>
    </location>
    <ligand>
        <name>substrate</name>
    </ligand>
</feature>
<feature type="binding site" evidence="1">
    <location>
        <position position="304"/>
    </location>
    <ligand>
        <name>ATP</name>
        <dbReference type="ChEBI" id="CHEBI:30616"/>
    </ligand>
</feature>
<feature type="binding site" evidence="1">
    <location>
        <position position="402"/>
    </location>
    <ligand>
        <name>ATP</name>
        <dbReference type="ChEBI" id="CHEBI:30616"/>
    </ligand>
</feature>
<feature type="disulfide bond" evidence="1">
    <location>
        <begin position="68"/>
        <end position="222"/>
    </location>
</feature>
<feature type="disulfide bond" evidence="1">
    <location>
        <begin position="353"/>
        <end position="370"/>
    </location>
</feature>
<feature type="disulfide bond" evidence="1">
    <location>
        <begin position="413"/>
        <end position="417"/>
    </location>
</feature>